<gene>
    <name type="primary">RPS21</name>
</gene>
<reference key="1">
    <citation type="submission" date="1999-12" db="EMBL/GenBank/DDBJ databases">
        <title>A novel method for systematic identification of genes required for growth of Candida albicans.</title>
        <authorList>
            <person name="De Backer M.D."/>
            <person name="Logghe M."/>
            <person name="Viaene J."/>
            <person name="Loonen I."/>
            <person name="Vandoninck S."/>
            <person name="de Hoogt R."/>
            <person name="Nelissen B."/>
            <person name="Dewaele S."/>
            <person name="Simons F."/>
            <person name="Verhasselt P."/>
            <person name="Contreras R."/>
            <person name="Luyten W.H.M.L."/>
        </authorList>
    </citation>
    <scope>NUCLEOTIDE SEQUENCE [MRNA]</scope>
</reference>
<evidence type="ECO:0000250" key="1"/>
<evidence type="ECO:0000305" key="2"/>
<keyword id="KW-0002">3D-structure</keyword>
<keyword id="KW-0963">Cytoplasm</keyword>
<keyword id="KW-0687">Ribonucleoprotein</keyword>
<keyword id="KW-0689">Ribosomal protein</keyword>
<keyword id="KW-0698">rRNA processing</keyword>
<comment type="function">
    <text evidence="1">Required for the processing of the 20S rRNA-precursor to mature 18S rRNA in a late step of the maturation of 40S ribosomal subunits. Has a physiological role leading to 18S rRNA stability (By similarity).</text>
</comment>
<comment type="subunit">
    <text>Component of the small ribosomal subunit. Mature ribosomes consist of a small (40S) and a large (60S) subunit. The 40S subunit contains about 33 different proteins and 1 molecule of RNA (18S). The 60S subunit contains about 49 different proteins and 3 molecules of RNA (25S, 5.8S and 5S).</text>
</comment>
<comment type="subcellular location">
    <subcellularLocation>
        <location evidence="1">Cytoplasm</location>
    </subcellularLocation>
</comment>
<comment type="similarity">
    <text evidence="2">Belongs to the eukaryotic ribosomal protein eS21 family.</text>
</comment>
<organism>
    <name type="scientific">Candida albicans</name>
    <name type="common">Yeast</name>
    <dbReference type="NCBI Taxonomy" id="5476"/>
    <lineage>
        <taxon>Eukaryota</taxon>
        <taxon>Fungi</taxon>
        <taxon>Dikarya</taxon>
        <taxon>Ascomycota</taxon>
        <taxon>Saccharomycotina</taxon>
        <taxon>Pichiomycetes</taxon>
        <taxon>Debaryomycetaceae</taxon>
        <taxon>Candida/Lodderomyces clade</taxon>
        <taxon>Candida</taxon>
    </lineage>
</organism>
<dbReference type="EMBL" id="AJ390495">
    <property type="protein sequence ID" value="CAB77635.1"/>
    <property type="molecule type" value="mRNA"/>
</dbReference>
<dbReference type="PDB" id="8C3A">
    <property type="method" value="X-ray"/>
    <property type="resolution" value="3.00 A"/>
    <property type="chains" value="DI/X=1-87"/>
</dbReference>
<dbReference type="PDB" id="8CQ7">
    <property type="method" value="X-ray"/>
    <property type="resolution" value="3.20 A"/>
    <property type="chains" value="DI/X=1-87"/>
</dbReference>
<dbReference type="PDB" id="8CQW">
    <property type="method" value="X-ray"/>
    <property type="resolution" value="3.05 A"/>
    <property type="chains" value="DI/X=1-87"/>
</dbReference>
<dbReference type="PDB" id="8CRE">
    <property type="method" value="X-ray"/>
    <property type="resolution" value="3.00 A"/>
    <property type="chains" value="DI/X=1-87"/>
</dbReference>
<dbReference type="PDB" id="8OEQ">
    <property type="method" value="X-ray"/>
    <property type="resolution" value="3.30 A"/>
    <property type="chains" value="DI/X=1-87"/>
</dbReference>
<dbReference type="PDB" id="8OGJ">
    <property type="method" value="EM"/>
    <property type="resolution" value="3.10 A"/>
    <property type="chains" value="W=1-87"/>
</dbReference>
<dbReference type="PDB" id="8OH6">
    <property type="method" value="X-ray"/>
    <property type="resolution" value="3.35 A"/>
    <property type="chains" value="DI/X=1-87"/>
</dbReference>
<dbReference type="PDB" id="8OI5">
    <property type="method" value="X-ray"/>
    <property type="resolution" value="2.90 A"/>
    <property type="chains" value="DI/X=1-87"/>
</dbReference>
<dbReference type="PDB" id="8OJ3">
    <property type="method" value="X-ray"/>
    <property type="resolution" value="3.50 A"/>
    <property type="chains" value="DI/X=1-87"/>
</dbReference>
<dbReference type="PDB" id="8Q5I">
    <property type="method" value="EM"/>
    <property type="resolution" value="2.45 A"/>
    <property type="chains" value="W=1-87"/>
</dbReference>
<dbReference type="PDBsum" id="8C3A"/>
<dbReference type="PDBsum" id="8CQ7"/>
<dbReference type="PDBsum" id="8CQW"/>
<dbReference type="PDBsum" id="8CRE"/>
<dbReference type="PDBsum" id="8OEQ"/>
<dbReference type="PDBsum" id="8OGJ"/>
<dbReference type="PDBsum" id="8OH6"/>
<dbReference type="PDBsum" id="8OI5"/>
<dbReference type="PDBsum" id="8OJ3"/>
<dbReference type="PDBsum" id="8Q5I"/>
<dbReference type="EMDB" id="EMD-16874"/>
<dbReference type="SMR" id="Q9P844"/>
<dbReference type="EnsemblFungi" id="C1_01370C_A-T">
    <property type="protein sequence ID" value="C1_01370C_A-T-p1"/>
    <property type="gene ID" value="C1_01370C_A"/>
</dbReference>
<dbReference type="VEuPathDB" id="FungiDB:C1_01370C_A"/>
<dbReference type="VEuPathDB" id="FungiDB:CAWG_01239"/>
<dbReference type="OMA" id="GESDACM"/>
<dbReference type="PhylomeDB" id="Q9P844"/>
<dbReference type="GO" id="GO:0005737">
    <property type="term" value="C:cytoplasm"/>
    <property type="evidence" value="ECO:0007669"/>
    <property type="project" value="UniProtKB-SubCell"/>
</dbReference>
<dbReference type="GO" id="GO:1990904">
    <property type="term" value="C:ribonucleoprotein complex"/>
    <property type="evidence" value="ECO:0007669"/>
    <property type="project" value="UniProtKB-KW"/>
</dbReference>
<dbReference type="GO" id="GO:0005840">
    <property type="term" value="C:ribosome"/>
    <property type="evidence" value="ECO:0007669"/>
    <property type="project" value="UniProtKB-KW"/>
</dbReference>
<dbReference type="GO" id="GO:0003735">
    <property type="term" value="F:structural constituent of ribosome"/>
    <property type="evidence" value="ECO:0007669"/>
    <property type="project" value="InterPro"/>
</dbReference>
<dbReference type="GO" id="GO:0006364">
    <property type="term" value="P:rRNA processing"/>
    <property type="evidence" value="ECO:0007669"/>
    <property type="project" value="UniProtKB-KW"/>
</dbReference>
<dbReference type="GO" id="GO:0006412">
    <property type="term" value="P:translation"/>
    <property type="evidence" value="ECO:0007669"/>
    <property type="project" value="InterPro"/>
</dbReference>
<dbReference type="FunFam" id="3.30.1230.20:FF:000001">
    <property type="entry name" value="40S ribosomal protein S21"/>
    <property type="match status" value="1"/>
</dbReference>
<dbReference type="Gene3D" id="3.30.1230.20">
    <property type="match status" value="1"/>
</dbReference>
<dbReference type="InterPro" id="IPR001931">
    <property type="entry name" value="Ribosomal_eS21"/>
</dbReference>
<dbReference type="InterPro" id="IPR018279">
    <property type="entry name" value="Ribosomal_eS21_CS"/>
</dbReference>
<dbReference type="InterPro" id="IPR038579">
    <property type="entry name" value="Ribosomal_eS21_sf"/>
</dbReference>
<dbReference type="PANTHER" id="PTHR10442">
    <property type="entry name" value="40S RIBOSOMAL PROTEIN S21"/>
    <property type="match status" value="1"/>
</dbReference>
<dbReference type="Pfam" id="PF01249">
    <property type="entry name" value="Ribosomal_S21e"/>
    <property type="match status" value="1"/>
</dbReference>
<dbReference type="PIRSF" id="PIRSF002148">
    <property type="entry name" value="Ribosomal_S21e"/>
    <property type="match status" value="1"/>
</dbReference>
<dbReference type="PROSITE" id="PS00996">
    <property type="entry name" value="RIBOSOMAL_S21E"/>
    <property type="match status" value="1"/>
</dbReference>
<sequence length="87" mass="9639">MENDKGQLVELYVPRKCSATNRIIKAKDHASVQISIAKVDEDGRAIAGENITYALSGYVRGRGEADDSLNRLAQQDGLLKNVWSYSR</sequence>
<proteinExistence type="evidence at protein level"/>
<protein>
    <recommendedName>
        <fullName evidence="2">Small ribosomal subunit protein eS21</fullName>
    </recommendedName>
    <alternativeName>
        <fullName>40S ribosomal protein S21</fullName>
    </alternativeName>
</protein>
<name>RS21_CANAX</name>
<accession>Q9P844</accession>
<feature type="chain" id="PRO_0000194756" description="Small ribosomal subunit protein eS21">
    <location>
        <begin position="1"/>
        <end position="87"/>
    </location>
</feature>